<protein>
    <recommendedName>
        <fullName evidence="1">Oxygen-dependent choline dehydrogenase</fullName>
        <shortName evidence="1">CDH</shortName>
        <shortName evidence="1">CHD</shortName>
        <ecNumber evidence="1">1.1.99.1</ecNumber>
    </recommendedName>
    <alternativeName>
        <fullName evidence="1">Betaine aldehyde dehydrogenase</fullName>
        <shortName evidence="1">BADH</shortName>
        <ecNumber evidence="1">1.2.1.8</ecNumber>
    </alternativeName>
</protein>
<accession>A7ZI50</accession>
<feature type="chain" id="PRO_1000062186" description="Oxygen-dependent choline dehydrogenase">
    <location>
        <begin position="1"/>
        <end position="556"/>
    </location>
</feature>
<feature type="active site" description="Proton acceptor" evidence="1">
    <location>
        <position position="473"/>
    </location>
</feature>
<feature type="binding site" evidence="1">
    <location>
        <begin position="4"/>
        <end position="33"/>
    </location>
    <ligand>
        <name>FAD</name>
        <dbReference type="ChEBI" id="CHEBI:57692"/>
    </ligand>
</feature>
<keyword id="KW-0274">FAD</keyword>
<keyword id="KW-0285">Flavoprotein</keyword>
<keyword id="KW-0520">NAD</keyword>
<keyword id="KW-0560">Oxidoreductase</keyword>
<keyword id="KW-1185">Reference proteome</keyword>
<name>BETA_ECO24</name>
<comment type="function">
    <text evidence="1">Involved in the biosynthesis of the osmoprotectant glycine betaine. Catalyzes the oxidation of choline to betaine aldehyde and betaine aldehyde to glycine betaine at the same rate.</text>
</comment>
<comment type="catalytic activity">
    <reaction evidence="1">
        <text>choline + A = betaine aldehyde + AH2</text>
        <dbReference type="Rhea" id="RHEA:17433"/>
        <dbReference type="ChEBI" id="CHEBI:13193"/>
        <dbReference type="ChEBI" id="CHEBI:15354"/>
        <dbReference type="ChEBI" id="CHEBI:15710"/>
        <dbReference type="ChEBI" id="CHEBI:17499"/>
        <dbReference type="EC" id="1.1.99.1"/>
    </reaction>
</comment>
<comment type="catalytic activity">
    <reaction evidence="1">
        <text>betaine aldehyde + NAD(+) + H2O = glycine betaine + NADH + 2 H(+)</text>
        <dbReference type="Rhea" id="RHEA:15305"/>
        <dbReference type="ChEBI" id="CHEBI:15377"/>
        <dbReference type="ChEBI" id="CHEBI:15378"/>
        <dbReference type="ChEBI" id="CHEBI:15710"/>
        <dbReference type="ChEBI" id="CHEBI:17750"/>
        <dbReference type="ChEBI" id="CHEBI:57540"/>
        <dbReference type="ChEBI" id="CHEBI:57945"/>
        <dbReference type="EC" id="1.2.1.8"/>
    </reaction>
</comment>
<comment type="cofactor">
    <cofactor evidence="1">
        <name>FAD</name>
        <dbReference type="ChEBI" id="CHEBI:57692"/>
    </cofactor>
</comment>
<comment type="pathway">
    <text evidence="1">Amine and polyamine biosynthesis; betaine biosynthesis via choline pathway; betaine aldehyde from choline (cytochrome c reductase route): step 1/1.</text>
</comment>
<comment type="similarity">
    <text evidence="1">Belongs to the GMC oxidoreductase family.</text>
</comment>
<reference key="1">
    <citation type="journal article" date="2008" name="J. Bacteriol.">
        <title>The pangenome structure of Escherichia coli: comparative genomic analysis of E. coli commensal and pathogenic isolates.</title>
        <authorList>
            <person name="Rasko D.A."/>
            <person name="Rosovitz M.J."/>
            <person name="Myers G.S.A."/>
            <person name="Mongodin E.F."/>
            <person name="Fricke W.F."/>
            <person name="Gajer P."/>
            <person name="Crabtree J."/>
            <person name="Sebaihia M."/>
            <person name="Thomson N.R."/>
            <person name="Chaudhuri R."/>
            <person name="Henderson I.R."/>
            <person name="Sperandio V."/>
            <person name="Ravel J."/>
        </authorList>
    </citation>
    <scope>NUCLEOTIDE SEQUENCE [LARGE SCALE GENOMIC DNA]</scope>
    <source>
        <strain>E24377A / ETEC</strain>
    </source>
</reference>
<sequence length="556" mass="61848">MQFDYIIIGAGSAGNVLATRLTEDPNTSVLLLEAGGPDYRFDFRTQMPAALAFPLQGKRYNWAYETEPEPFMNNRRMECGRGKGLGGSSLINGMCYIRGNALDLDNWAQEPGLENWSYLDCLPYYRKAETRDVGENDYHGGDGPVSVTTSKPGVNPLFEAMIEAGVQAGYPRTDDLNGYQQEGFGPMDRTVTPQGRRASTARGYLDQAKSRPNLTIRTHAMTDHIIFDGKRAVGVEWLEGDSTIPTRATANKEVLLCAGAIASPQILQRSGVGNAELLAEFDIPLVHELPGVGENLQDHLEMYLQYECKEPVSLYPALQWWNQPKIGAEWLFGGTGVGASNHFEAGGFIRSREEFAWPNIQYHFLPVAINYNGSNAVKEHGFQCHVGSMRSPSRGHVRIKSRDPHQHPAILFNYMSHEQDWQEFRDAIRITREIMHQPALDQYRGREISPGTECQTDEQLDEFVRNHAETAFHPCGTCKMGYDEMSVVDGEGRVHGLEGLRVVDASIMPQIITGNLNATTIMIGEKIADMIRGQEALPRSTAGYFVANGMPVRAKK</sequence>
<evidence type="ECO:0000255" key="1">
    <source>
        <dbReference type="HAMAP-Rule" id="MF_00750"/>
    </source>
</evidence>
<organism>
    <name type="scientific">Escherichia coli O139:H28 (strain E24377A / ETEC)</name>
    <dbReference type="NCBI Taxonomy" id="331111"/>
    <lineage>
        <taxon>Bacteria</taxon>
        <taxon>Pseudomonadati</taxon>
        <taxon>Pseudomonadota</taxon>
        <taxon>Gammaproteobacteria</taxon>
        <taxon>Enterobacterales</taxon>
        <taxon>Enterobacteriaceae</taxon>
        <taxon>Escherichia</taxon>
    </lineage>
</organism>
<proteinExistence type="inferred from homology"/>
<dbReference type="EC" id="1.1.99.1" evidence="1"/>
<dbReference type="EC" id="1.2.1.8" evidence="1"/>
<dbReference type="EMBL" id="CP000800">
    <property type="protein sequence ID" value="ABV20254.1"/>
    <property type="molecule type" value="Genomic_DNA"/>
</dbReference>
<dbReference type="RefSeq" id="WP_001159102.1">
    <property type="nucleotide sequence ID" value="NC_009801.1"/>
</dbReference>
<dbReference type="SMR" id="A7ZI50"/>
<dbReference type="GeneID" id="75206487"/>
<dbReference type="KEGG" id="ecw:EcE24377A_0326"/>
<dbReference type="HOGENOM" id="CLU_002865_7_1_6"/>
<dbReference type="UniPathway" id="UPA00529">
    <property type="reaction ID" value="UER00385"/>
</dbReference>
<dbReference type="Proteomes" id="UP000001122">
    <property type="component" value="Chromosome"/>
</dbReference>
<dbReference type="GO" id="GO:0016020">
    <property type="term" value="C:membrane"/>
    <property type="evidence" value="ECO:0007669"/>
    <property type="project" value="TreeGrafter"/>
</dbReference>
<dbReference type="GO" id="GO:0008802">
    <property type="term" value="F:betaine-aldehyde dehydrogenase (NAD+) activity"/>
    <property type="evidence" value="ECO:0007669"/>
    <property type="project" value="UniProtKB-EC"/>
</dbReference>
<dbReference type="GO" id="GO:0008812">
    <property type="term" value="F:choline dehydrogenase activity"/>
    <property type="evidence" value="ECO:0007669"/>
    <property type="project" value="UniProtKB-UniRule"/>
</dbReference>
<dbReference type="GO" id="GO:0050660">
    <property type="term" value="F:flavin adenine dinucleotide binding"/>
    <property type="evidence" value="ECO:0007669"/>
    <property type="project" value="InterPro"/>
</dbReference>
<dbReference type="GO" id="GO:0019285">
    <property type="term" value="P:glycine betaine biosynthetic process from choline"/>
    <property type="evidence" value="ECO:0007669"/>
    <property type="project" value="UniProtKB-UniRule"/>
</dbReference>
<dbReference type="Gene3D" id="3.50.50.60">
    <property type="entry name" value="FAD/NAD(P)-binding domain"/>
    <property type="match status" value="1"/>
</dbReference>
<dbReference type="Gene3D" id="3.30.560.10">
    <property type="entry name" value="Glucose Oxidase, domain 3"/>
    <property type="match status" value="1"/>
</dbReference>
<dbReference type="HAMAP" id="MF_00750">
    <property type="entry name" value="Choline_dehydrogen"/>
    <property type="match status" value="1"/>
</dbReference>
<dbReference type="InterPro" id="IPR011533">
    <property type="entry name" value="BetA"/>
</dbReference>
<dbReference type="InterPro" id="IPR036188">
    <property type="entry name" value="FAD/NAD-bd_sf"/>
</dbReference>
<dbReference type="InterPro" id="IPR012132">
    <property type="entry name" value="GMC_OxRdtase"/>
</dbReference>
<dbReference type="InterPro" id="IPR000172">
    <property type="entry name" value="GMC_OxRdtase_N"/>
</dbReference>
<dbReference type="InterPro" id="IPR007867">
    <property type="entry name" value="GMC_OxRtase_C"/>
</dbReference>
<dbReference type="NCBIfam" id="TIGR01810">
    <property type="entry name" value="betA"/>
    <property type="match status" value="1"/>
</dbReference>
<dbReference type="NCBIfam" id="NF002550">
    <property type="entry name" value="PRK02106.1"/>
    <property type="match status" value="1"/>
</dbReference>
<dbReference type="PANTHER" id="PTHR11552:SF147">
    <property type="entry name" value="CHOLINE DEHYDROGENASE, MITOCHONDRIAL"/>
    <property type="match status" value="1"/>
</dbReference>
<dbReference type="PANTHER" id="PTHR11552">
    <property type="entry name" value="GLUCOSE-METHANOL-CHOLINE GMC OXIDOREDUCTASE"/>
    <property type="match status" value="1"/>
</dbReference>
<dbReference type="Pfam" id="PF05199">
    <property type="entry name" value="GMC_oxred_C"/>
    <property type="match status" value="1"/>
</dbReference>
<dbReference type="Pfam" id="PF00732">
    <property type="entry name" value="GMC_oxred_N"/>
    <property type="match status" value="1"/>
</dbReference>
<dbReference type="PIRSF" id="PIRSF000137">
    <property type="entry name" value="Alcohol_oxidase"/>
    <property type="match status" value="1"/>
</dbReference>
<dbReference type="SUPFAM" id="SSF54373">
    <property type="entry name" value="FAD-linked reductases, C-terminal domain"/>
    <property type="match status" value="1"/>
</dbReference>
<dbReference type="SUPFAM" id="SSF51905">
    <property type="entry name" value="FAD/NAD(P)-binding domain"/>
    <property type="match status" value="1"/>
</dbReference>
<dbReference type="PROSITE" id="PS00623">
    <property type="entry name" value="GMC_OXRED_1"/>
    <property type="match status" value="1"/>
</dbReference>
<dbReference type="PROSITE" id="PS00624">
    <property type="entry name" value="GMC_OXRED_2"/>
    <property type="match status" value="1"/>
</dbReference>
<gene>
    <name evidence="1" type="primary">betA</name>
    <name type="ordered locus">EcE24377A_0326</name>
</gene>